<accession>Q92SP2</accession>
<protein>
    <recommendedName>
        <fullName evidence="1">Undecaprenyl-diphosphatase</fullName>
        <ecNumber evidence="1">3.6.1.27</ecNumber>
    </recommendedName>
    <alternativeName>
        <fullName evidence="1">Bacitracin resistance protein</fullName>
    </alternativeName>
    <alternativeName>
        <fullName evidence="1">Undecaprenyl pyrophosphate phosphatase</fullName>
    </alternativeName>
</protein>
<evidence type="ECO:0000255" key="1">
    <source>
        <dbReference type="HAMAP-Rule" id="MF_01006"/>
    </source>
</evidence>
<feature type="chain" id="PRO_0000151187" description="Undecaprenyl-diphosphatase">
    <location>
        <begin position="1"/>
        <end position="268"/>
    </location>
</feature>
<feature type="transmembrane region" description="Helical" evidence="1">
    <location>
        <begin position="5"/>
        <end position="25"/>
    </location>
</feature>
<feature type="transmembrane region" description="Helical" evidence="1">
    <location>
        <begin position="43"/>
        <end position="63"/>
    </location>
</feature>
<feature type="transmembrane region" description="Helical" evidence="1">
    <location>
        <begin position="84"/>
        <end position="104"/>
    </location>
</feature>
<feature type="transmembrane region" description="Helical" evidence="1">
    <location>
        <begin position="107"/>
        <end position="127"/>
    </location>
</feature>
<feature type="transmembrane region" description="Helical" evidence="1">
    <location>
        <begin position="184"/>
        <end position="204"/>
    </location>
</feature>
<feature type="transmembrane region" description="Helical" evidence="1">
    <location>
        <begin position="213"/>
        <end position="233"/>
    </location>
</feature>
<feature type="transmembrane region" description="Helical" evidence="1">
    <location>
        <begin position="248"/>
        <end position="268"/>
    </location>
</feature>
<organism>
    <name type="scientific">Rhizobium meliloti (strain 1021)</name>
    <name type="common">Ensifer meliloti</name>
    <name type="synonym">Sinorhizobium meliloti</name>
    <dbReference type="NCBI Taxonomy" id="266834"/>
    <lineage>
        <taxon>Bacteria</taxon>
        <taxon>Pseudomonadati</taxon>
        <taxon>Pseudomonadota</taxon>
        <taxon>Alphaproteobacteria</taxon>
        <taxon>Hyphomicrobiales</taxon>
        <taxon>Rhizobiaceae</taxon>
        <taxon>Sinorhizobium/Ensifer group</taxon>
        <taxon>Sinorhizobium</taxon>
    </lineage>
</organism>
<name>UPPP_RHIME</name>
<reference key="1">
    <citation type="journal article" date="2001" name="Proc. Natl. Acad. Sci. U.S.A.">
        <title>Analysis of the chromosome sequence of the legume symbiont Sinorhizobium meliloti strain 1021.</title>
        <authorList>
            <person name="Capela D."/>
            <person name="Barloy-Hubler F."/>
            <person name="Gouzy J."/>
            <person name="Bothe G."/>
            <person name="Ampe F."/>
            <person name="Batut J."/>
            <person name="Boistard P."/>
            <person name="Becker A."/>
            <person name="Boutry M."/>
            <person name="Cadieu E."/>
            <person name="Dreano S."/>
            <person name="Gloux S."/>
            <person name="Godrie T."/>
            <person name="Goffeau A."/>
            <person name="Kahn D."/>
            <person name="Kiss E."/>
            <person name="Lelaure V."/>
            <person name="Masuy D."/>
            <person name="Pohl T."/>
            <person name="Portetelle D."/>
            <person name="Puehler A."/>
            <person name="Purnelle B."/>
            <person name="Ramsperger U."/>
            <person name="Renard C."/>
            <person name="Thebault P."/>
            <person name="Vandenbol M."/>
            <person name="Weidner S."/>
            <person name="Galibert F."/>
        </authorList>
    </citation>
    <scope>NUCLEOTIDE SEQUENCE [LARGE SCALE GENOMIC DNA]</scope>
    <source>
        <strain>1021</strain>
    </source>
</reference>
<reference key="2">
    <citation type="journal article" date="2001" name="Science">
        <title>The composite genome of the legume symbiont Sinorhizobium meliloti.</title>
        <authorList>
            <person name="Galibert F."/>
            <person name="Finan T.M."/>
            <person name="Long S.R."/>
            <person name="Puehler A."/>
            <person name="Abola P."/>
            <person name="Ampe F."/>
            <person name="Barloy-Hubler F."/>
            <person name="Barnett M.J."/>
            <person name="Becker A."/>
            <person name="Boistard P."/>
            <person name="Bothe G."/>
            <person name="Boutry M."/>
            <person name="Bowser L."/>
            <person name="Buhrmester J."/>
            <person name="Cadieu E."/>
            <person name="Capela D."/>
            <person name="Chain P."/>
            <person name="Cowie A."/>
            <person name="Davis R.W."/>
            <person name="Dreano S."/>
            <person name="Federspiel N.A."/>
            <person name="Fisher R.F."/>
            <person name="Gloux S."/>
            <person name="Godrie T."/>
            <person name="Goffeau A."/>
            <person name="Golding B."/>
            <person name="Gouzy J."/>
            <person name="Gurjal M."/>
            <person name="Hernandez-Lucas I."/>
            <person name="Hong A."/>
            <person name="Huizar L."/>
            <person name="Hyman R.W."/>
            <person name="Jones T."/>
            <person name="Kahn D."/>
            <person name="Kahn M.L."/>
            <person name="Kalman S."/>
            <person name="Keating D.H."/>
            <person name="Kiss E."/>
            <person name="Komp C."/>
            <person name="Lelaure V."/>
            <person name="Masuy D."/>
            <person name="Palm C."/>
            <person name="Peck M.C."/>
            <person name="Pohl T.M."/>
            <person name="Portetelle D."/>
            <person name="Purnelle B."/>
            <person name="Ramsperger U."/>
            <person name="Surzycki R."/>
            <person name="Thebault P."/>
            <person name="Vandenbol M."/>
            <person name="Vorhoelter F.J."/>
            <person name="Weidner S."/>
            <person name="Wells D.H."/>
            <person name="Wong K."/>
            <person name="Yeh K.-C."/>
            <person name="Batut J."/>
        </authorList>
    </citation>
    <scope>NUCLEOTIDE SEQUENCE [LARGE SCALE GENOMIC DNA]</scope>
    <source>
        <strain>1021</strain>
    </source>
</reference>
<sequence>MADQSIISALVLGLIEGLTEFIPVSSTAHVLLAGHFLGFKSPGNTFAVLIQLGAILAILLVYFQKLLAIALALPTSVKARRFVFSVLLAFLPAALIGAAAHGFIKSVLFETPMLICVVLIVGGIILYAIDRLPLTPRYTDVFDYPPSLALKIGLFQCLAMIPGTSRSGATIAGALLMGTDKRSAAEFSFFLAMPTMVGAFALDLYKNRDALSFDDVGLIAAGFIAAFIAGIFVVRSLLDFVSHRGFTPFAIWRILVGTAGLVGLWLLG</sequence>
<keyword id="KW-0046">Antibiotic resistance</keyword>
<keyword id="KW-0997">Cell inner membrane</keyword>
<keyword id="KW-1003">Cell membrane</keyword>
<keyword id="KW-0133">Cell shape</keyword>
<keyword id="KW-0961">Cell wall biogenesis/degradation</keyword>
<keyword id="KW-0378">Hydrolase</keyword>
<keyword id="KW-0472">Membrane</keyword>
<keyword id="KW-0573">Peptidoglycan synthesis</keyword>
<keyword id="KW-1185">Reference proteome</keyword>
<keyword id="KW-0812">Transmembrane</keyword>
<keyword id="KW-1133">Transmembrane helix</keyword>
<proteinExistence type="inferred from homology"/>
<gene>
    <name evidence="1" type="primary">uppP</name>
    <name type="synonym">bacA</name>
    <name type="synonym">upk</name>
    <name type="ordered locus">R00328</name>
    <name type="ORF">SMc00408</name>
</gene>
<dbReference type="EC" id="3.6.1.27" evidence="1"/>
<dbReference type="EMBL" id="AL591688">
    <property type="protein sequence ID" value="CAC41765.1"/>
    <property type="molecule type" value="Genomic_DNA"/>
</dbReference>
<dbReference type="RefSeq" id="NP_384434.1">
    <property type="nucleotide sequence ID" value="NC_003047.1"/>
</dbReference>
<dbReference type="RefSeq" id="WP_010968508.1">
    <property type="nucleotide sequence ID" value="NC_003047.1"/>
</dbReference>
<dbReference type="SMR" id="Q92SP2"/>
<dbReference type="EnsemblBacteria" id="CAC41765">
    <property type="protein sequence ID" value="CAC41765"/>
    <property type="gene ID" value="SMc00408"/>
</dbReference>
<dbReference type="KEGG" id="sme:SMc00408"/>
<dbReference type="PATRIC" id="fig|266834.11.peg.1699"/>
<dbReference type="eggNOG" id="COG1968">
    <property type="taxonomic scope" value="Bacteria"/>
</dbReference>
<dbReference type="HOGENOM" id="CLU_060296_2_0_5"/>
<dbReference type="OrthoDB" id="9808289at2"/>
<dbReference type="Proteomes" id="UP000001976">
    <property type="component" value="Chromosome"/>
</dbReference>
<dbReference type="GO" id="GO:0005886">
    <property type="term" value="C:plasma membrane"/>
    <property type="evidence" value="ECO:0007669"/>
    <property type="project" value="UniProtKB-SubCell"/>
</dbReference>
<dbReference type="GO" id="GO:0050380">
    <property type="term" value="F:undecaprenyl-diphosphatase activity"/>
    <property type="evidence" value="ECO:0007669"/>
    <property type="project" value="UniProtKB-UniRule"/>
</dbReference>
<dbReference type="GO" id="GO:0071555">
    <property type="term" value="P:cell wall organization"/>
    <property type="evidence" value="ECO:0007669"/>
    <property type="project" value="UniProtKB-KW"/>
</dbReference>
<dbReference type="GO" id="GO:0009252">
    <property type="term" value="P:peptidoglycan biosynthetic process"/>
    <property type="evidence" value="ECO:0007669"/>
    <property type="project" value="UniProtKB-KW"/>
</dbReference>
<dbReference type="GO" id="GO:0008360">
    <property type="term" value="P:regulation of cell shape"/>
    <property type="evidence" value="ECO:0007669"/>
    <property type="project" value="UniProtKB-KW"/>
</dbReference>
<dbReference type="GO" id="GO:0046677">
    <property type="term" value="P:response to antibiotic"/>
    <property type="evidence" value="ECO:0007669"/>
    <property type="project" value="UniProtKB-UniRule"/>
</dbReference>
<dbReference type="HAMAP" id="MF_01006">
    <property type="entry name" value="Undec_diphosphatase"/>
    <property type="match status" value="1"/>
</dbReference>
<dbReference type="InterPro" id="IPR003824">
    <property type="entry name" value="UppP"/>
</dbReference>
<dbReference type="NCBIfam" id="NF001389">
    <property type="entry name" value="PRK00281.1-2"/>
    <property type="match status" value="1"/>
</dbReference>
<dbReference type="PANTHER" id="PTHR30622">
    <property type="entry name" value="UNDECAPRENYL-DIPHOSPHATASE"/>
    <property type="match status" value="1"/>
</dbReference>
<dbReference type="PANTHER" id="PTHR30622:SF3">
    <property type="entry name" value="UNDECAPRENYL-DIPHOSPHATASE"/>
    <property type="match status" value="1"/>
</dbReference>
<dbReference type="Pfam" id="PF02673">
    <property type="entry name" value="BacA"/>
    <property type="match status" value="1"/>
</dbReference>
<comment type="function">
    <text evidence="1">Catalyzes the dephosphorylation of undecaprenyl diphosphate (UPP). Confers resistance to bacitracin.</text>
</comment>
<comment type="catalytic activity">
    <reaction evidence="1">
        <text>di-trans,octa-cis-undecaprenyl diphosphate + H2O = di-trans,octa-cis-undecaprenyl phosphate + phosphate + H(+)</text>
        <dbReference type="Rhea" id="RHEA:28094"/>
        <dbReference type="ChEBI" id="CHEBI:15377"/>
        <dbReference type="ChEBI" id="CHEBI:15378"/>
        <dbReference type="ChEBI" id="CHEBI:43474"/>
        <dbReference type="ChEBI" id="CHEBI:58405"/>
        <dbReference type="ChEBI" id="CHEBI:60392"/>
        <dbReference type="EC" id="3.6.1.27"/>
    </reaction>
</comment>
<comment type="subcellular location">
    <subcellularLocation>
        <location evidence="1">Cell inner membrane</location>
        <topology evidence="1">Multi-pass membrane protein</topology>
    </subcellularLocation>
</comment>
<comment type="miscellaneous">
    <text>Bacitracin is thought to be involved in the inhibition of peptidoglycan synthesis by sequestering undecaprenyl diphosphate, thereby reducing the pool of lipid carrier available.</text>
</comment>
<comment type="similarity">
    <text evidence="1">Belongs to the UppP family.</text>
</comment>